<dbReference type="EMBL" id="AE000782">
    <property type="protein sequence ID" value="AAB89328.1"/>
    <property type="molecule type" value="Genomic_DNA"/>
</dbReference>
<dbReference type="PIR" id="B69492">
    <property type="entry name" value="B69492"/>
</dbReference>
<dbReference type="SMR" id="O28340"/>
<dbReference type="STRING" id="224325.AF_1939"/>
<dbReference type="PaxDb" id="224325-AF_1939"/>
<dbReference type="EnsemblBacteria" id="AAB89328">
    <property type="protein sequence ID" value="AAB89328"/>
    <property type="gene ID" value="AF_1939"/>
</dbReference>
<dbReference type="KEGG" id="afu:AF_1939"/>
<dbReference type="HOGENOM" id="CLU_3322749_0_0_2"/>
<dbReference type="Proteomes" id="UP000002199">
    <property type="component" value="Chromosome"/>
</dbReference>
<organism>
    <name type="scientific">Archaeoglobus fulgidus (strain ATCC 49558 / DSM 4304 / JCM 9628 / NBRC 100126 / VC-16)</name>
    <dbReference type="NCBI Taxonomy" id="224325"/>
    <lineage>
        <taxon>Archaea</taxon>
        <taxon>Methanobacteriati</taxon>
        <taxon>Methanobacteriota</taxon>
        <taxon>Archaeoglobi</taxon>
        <taxon>Archaeoglobales</taxon>
        <taxon>Archaeoglobaceae</taxon>
        <taxon>Archaeoglobus</taxon>
    </lineage>
</organism>
<feature type="chain" id="PRO_0000128073" description="Uncharacterized protein AF_1939">
    <location>
        <begin position="1"/>
        <end position="38"/>
    </location>
</feature>
<accession>O28340</accession>
<protein>
    <recommendedName>
        <fullName>Uncharacterized protein AF_1939</fullName>
    </recommendedName>
</protein>
<name>Y1939_ARCFU</name>
<reference key="1">
    <citation type="journal article" date="1997" name="Nature">
        <title>The complete genome sequence of the hyperthermophilic, sulphate-reducing archaeon Archaeoglobus fulgidus.</title>
        <authorList>
            <person name="Klenk H.-P."/>
            <person name="Clayton R.A."/>
            <person name="Tomb J.-F."/>
            <person name="White O."/>
            <person name="Nelson K.E."/>
            <person name="Ketchum K.A."/>
            <person name="Dodson R.J."/>
            <person name="Gwinn M.L."/>
            <person name="Hickey E.K."/>
            <person name="Peterson J.D."/>
            <person name="Richardson D.L."/>
            <person name="Kerlavage A.R."/>
            <person name="Graham D.E."/>
            <person name="Kyrpides N.C."/>
            <person name="Fleischmann R.D."/>
            <person name="Quackenbush J."/>
            <person name="Lee N.H."/>
            <person name="Sutton G.G."/>
            <person name="Gill S.R."/>
            <person name="Kirkness E.F."/>
            <person name="Dougherty B.A."/>
            <person name="McKenney K."/>
            <person name="Adams M.D."/>
            <person name="Loftus B.J."/>
            <person name="Peterson S.N."/>
            <person name="Reich C.I."/>
            <person name="McNeil L.K."/>
            <person name="Badger J.H."/>
            <person name="Glodek A."/>
            <person name="Zhou L."/>
            <person name="Overbeek R."/>
            <person name="Gocayne J.D."/>
            <person name="Weidman J.F."/>
            <person name="McDonald L.A."/>
            <person name="Utterback T.R."/>
            <person name="Cotton M.D."/>
            <person name="Spriggs T."/>
            <person name="Artiach P."/>
            <person name="Kaine B.P."/>
            <person name="Sykes S.M."/>
            <person name="Sadow P.W."/>
            <person name="D'Andrea K.P."/>
            <person name="Bowman C."/>
            <person name="Fujii C."/>
            <person name="Garland S.A."/>
            <person name="Mason T.M."/>
            <person name="Olsen G.J."/>
            <person name="Fraser C.M."/>
            <person name="Smith H.O."/>
            <person name="Woese C.R."/>
            <person name="Venter J.C."/>
        </authorList>
    </citation>
    <scope>NUCLEOTIDE SEQUENCE [LARGE SCALE GENOMIC DNA]</scope>
    <source>
        <strain>ATCC 49558 / DSM 4304 / JCM 9628 / NBRC 100126 / VC-16</strain>
    </source>
</reference>
<proteinExistence type="predicted"/>
<gene>
    <name type="ordered locus">AF_1939</name>
</gene>
<keyword id="KW-1185">Reference proteome</keyword>
<sequence length="38" mass="4612">MTEAERFQMIKESVSKNAEKLTRMDIFEMVRKKKIIHD</sequence>